<reference key="1">
    <citation type="journal article" date="2002" name="Nature">
        <title>The genome sequence of Schizosaccharomyces pombe.</title>
        <authorList>
            <person name="Wood V."/>
            <person name="Gwilliam R."/>
            <person name="Rajandream M.A."/>
            <person name="Lyne M.H."/>
            <person name="Lyne R."/>
            <person name="Stewart A."/>
            <person name="Sgouros J.G."/>
            <person name="Peat N."/>
            <person name="Hayles J."/>
            <person name="Baker S.G."/>
            <person name="Basham D."/>
            <person name="Bowman S."/>
            <person name="Brooks K."/>
            <person name="Brown D."/>
            <person name="Brown S."/>
            <person name="Chillingworth T."/>
            <person name="Churcher C.M."/>
            <person name="Collins M."/>
            <person name="Connor R."/>
            <person name="Cronin A."/>
            <person name="Davis P."/>
            <person name="Feltwell T."/>
            <person name="Fraser A."/>
            <person name="Gentles S."/>
            <person name="Goble A."/>
            <person name="Hamlin N."/>
            <person name="Harris D.E."/>
            <person name="Hidalgo J."/>
            <person name="Hodgson G."/>
            <person name="Holroyd S."/>
            <person name="Hornsby T."/>
            <person name="Howarth S."/>
            <person name="Huckle E.J."/>
            <person name="Hunt S."/>
            <person name="Jagels K."/>
            <person name="James K.D."/>
            <person name="Jones L."/>
            <person name="Jones M."/>
            <person name="Leather S."/>
            <person name="McDonald S."/>
            <person name="McLean J."/>
            <person name="Mooney P."/>
            <person name="Moule S."/>
            <person name="Mungall K.L."/>
            <person name="Murphy L.D."/>
            <person name="Niblett D."/>
            <person name="Odell C."/>
            <person name="Oliver K."/>
            <person name="O'Neil S."/>
            <person name="Pearson D."/>
            <person name="Quail M.A."/>
            <person name="Rabbinowitsch E."/>
            <person name="Rutherford K.M."/>
            <person name="Rutter S."/>
            <person name="Saunders D."/>
            <person name="Seeger K."/>
            <person name="Sharp S."/>
            <person name="Skelton J."/>
            <person name="Simmonds M.N."/>
            <person name="Squares R."/>
            <person name="Squares S."/>
            <person name="Stevens K."/>
            <person name="Taylor K."/>
            <person name="Taylor R.G."/>
            <person name="Tivey A."/>
            <person name="Walsh S.V."/>
            <person name="Warren T."/>
            <person name="Whitehead S."/>
            <person name="Woodward J.R."/>
            <person name="Volckaert G."/>
            <person name="Aert R."/>
            <person name="Robben J."/>
            <person name="Grymonprez B."/>
            <person name="Weltjens I."/>
            <person name="Vanstreels E."/>
            <person name="Rieger M."/>
            <person name="Schaefer M."/>
            <person name="Mueller-Auer S."/>
            <person name="Gabel C."/>
            <person name="Fuchs M."/>
            <person name="Duesterhoeft A."/>
            <person name="Fritzc C."/>
            <person name="Holzer E."/>
            <person name="Moestl D."/>
            <person name="Hilbert H."/>
            <person name="Borzym K."/>
            <person name="Langer I."/>
            <person name="Beck A."/>
            <person name="Lehrach H."/>
            <person name="Reinhardt R."/>
            <person name="Pohl T.M."/>
            <person name="Eger P."/>
            <person name="Zimmermann W."/>
            <person name="Wedler H."/>
            <person name="Wambutt R."/>
            <person name="Purnelle B."/>
            <person name="Goffeau A."/>
            <person name="Cadieu E."/>
            <person name="Dreano S."/>
            <person name="Gloux S."/>
            <person name="Lelaure V."/>
            <person name="Mottier S."/>
            <person name="Galibert F."/>
            <person name="Aves S.J."/>
            <person name="Xiang Z."/>
            <person name="Hunt C."/>
            <person name="Moore K."/>
            <person name="Hurst S.M."/>
            <person name="Lucas M."/>
            <person name="Rochet M."/>
            <person name="Gaillardin C."/>
            <person name="Tallada V.A."/>
            <person name="Garzon A."/>
            <person name="Thode G."/>
            <person name="Daga R.R."/>
            <person name="Cruzado L."/>
            <person name="Jimenez J."/>
            <person name="Sanchez M."/>
            <person name="del Rey F."/>
            <person name="Benito J."/>
            <person name="Dominguez A."/>
            <person name="Revuelta J.L."/>
            <person name="Moreno S."/>
            <person name="Armstrong J."/>
            <person name="Forsburg S.L."/>
            <person name="Cerutti L."/>
            <person name="Lowe T."/>
            <person name="McCombie W.R."/>
            <person name="Paulsen I."/>
            <person name="Potashkin J."/>
            <person name="Shpakovski G.V."/>
            <person name="Ussery D."/>
            <person name="Barrell B.G."/>
            <person name="Nurse P."/>
        </authorList>
    </citation>
    <scope>NUCLEOTIDE SEQUENCE [LARGE SCALE GENOMIC DNA]</scope>
    <source>
        <strain>972 / ATCC 24843</strain>
    </source>
</reference>
<gene>
    <name type="ORF">SPBCPT2R1.04c</name>
</gene>
<feature type="chain" id="PRO_0000437226" description="UPF0494 membrane protein SPBCPT2R1.04c">
    <location>
        <begin position="1"/>
        <end position="280"/>
    </location>
</feature>
<feature type="transmembrane region" description="Helical" evidence="1">
    <location>
        <begin position="107"/>
        <end position="127"/>
    </location>
</feature>
<feature type="transmembrane region" description="Helical" evidence="1">
    <location>
        <begin position="144"/>
        <end position="164"/>
    </location>
</feature>
<feature type="transmembrane region" description="Helical" evidence="1">
    <location>
        <begin position="178"/>
        <end position="198"/>
    </location>
</feature>
<feature type="transmembrane region" description="Helical" evidence="1">
    <location>
        <begin position="199"/>
        <end position="219"/>
    </location>
</feature>
<name>YP44_SCHPO</name>
<comment type="subcellular location">
    <subcellularLocation>
        <location evidence="1">Membrane</location>
        <topology evidence="1">Multi-pass membrane protein</topology>
    </subcellularLocation>
</comment>
<comment type="similarity">
    <text evidence="2">Belongs to the UPF0494 family.</text>
</comment>
<protein>
    <recommendedName>
        <fullName>UPF0494 membrane protein SPBCPT2R1.04c</fullName>
    </recommendedName>
</protein>
<proteinExistence type="inferred from homology"/>
<accession>P0CT99</accession>
<accession>Q9HGQ1</accession>
<dbReference type="EMBL" id="BX784043">
    <property type="protein sequence ID" value="CAE54419.1"/>
    <property type="molecule type" value="Genomic_DNA"/>
</dbReference>
<dbReference type="EMBL" id="CU329671">
    <property type="protein sequence ID" value="CAO77673.1"/>
    <property type="molecule type" value="Genomic_DNA"/>
</dbReference>
<dbReference type="RefSeq" id="NP_595035.1">
    <property type="nucleotide sequence ID" value="NM_001018173.2"/>
</dbReference>
<dbReference type="RefSeq" id="XP_001713157.1">
    <property type="nucleotide sequence ID" value="XM_001713105.2"/>
</dbReference>
<dbReference type="SMR" id="P0CT99"/>
<dbReference type="EnsemblFungi" id="SPAC212.01c.1">
    <property type="protein sequence ID" value="SPAC212.01c.1:pep"/>
    <property type="gene ID" value="SPAC212.01c"/>
</dbReference>
<dbReference type="EnsemblFungi" id="SPBCPT2R1.04c.1">
    <property type="protein sequence ID" value="SPBCPT2R1.04c.1:pep"/>
    <property type="gene ID" value="SPBCPT2R1.04c"/>
</dbReference>
<dbReference type="KEGG" id="spo:2542040"/>
<dbReference type="PomBase" id="SPBCPT2R1.04c"/>
<dbReference type="VEuPathDB" id="FungiDB:SPAC212.01c"/>
<dbReference type="VEuPathDB" id="FungiDB:SPBCPT2R1.04c"/>
<dbReference type="InParanoid" id="P0CT99"/>
<dbReference type="OMA" id="LLMIWAT"/>
<dbReference type="PhylomeDB" id="P0CT99"/>
<dbReference type="PRO" id="PR:P0CT99"/>
<dbReference type="Proteomes" id="UP000002485">
    <property type="component" value="Chromosome II"/>
</dbReference>
<dbReference type="GO" id="GO:0009897">
    <property type="term" value="C:external side of plasma membrane"/>
    <property type="evidence" value="ECO:0000303"/>
    <property type="project" value="PomBase"/>
</dbReference>
<dbReference type="InterPro" id="IPR009340">
    <property type="entry name" value="DUF999"/>
</dbReference>
<dbReference type="Pfam" id="PF06198">
    <property type="entry name" value="DUF999"/>
    <property type="match status" value="1"/>
</dbReference>
<organism>
    <name type="scientific">Schizosaccharomyces pombe (strain 972 / ATCC 24843)</name>
    <name type="common">Fission yeast</name>
    <dbReference type="NCBI Taxonomy" id="284812"/>
    <lineage>
        <taxon>Eukaryota</taxon>
        <taxon>Fungi</taxon>
        <taxon>Dikarya</taxon>
        <taxon>Ascomycota</taxon>
        <taxon>Taphrinomycotina</taxon>
        <taxon>Schizosaccharomycetes</taxon>
        <taxon>Schizosaccharomycetales</taxon>
        <taxon>Schizosaccharomycetaceae</taxon>
        <taxon>Schizosaccharomyces</taxon>
    </lineage>
</organism>
<evidence type="ECO:0000255" key="1"/>
<evidence type="ECO:0000305" key="2"/>
<keyword id="KW-0472">Membrane</keyword>
<keyword id="KW-1185">Reference proteome</keyword>
<keyword id="KW-0812">Transmembrane</keyword>
<keyword id="KW-1133">Transmembrane helix</keyword>
<sequence length="280" mass="31590">MSNPESLKKQVEPPGYNELFMVEDVCNVDLEQGLDLCKPEKVNKQSQRSRQSRQSLFTNTIKPQKDKMNIKTNKIKEFLNDLFTEFSKFHNSYYPDGRISTRSNFRWPLLIIWSIIIVFAVDKKFEVQKFLSIWINENRFYSEIWVPIAIYVCLLVLMLLSLIFFAEFAVLALRVTGVIIAVLGAVLGMIIAVLGMIIAALGMIIAALGATITGLLYFGHWALYKLVILSLGFKIVTPGDVCVSNTLPTHNGETALHSETTVGSDIEQIELQNMPTPVKK</sequence>